<gene>
    <name type="primary">I</name>
    <name type="synonym">Z</name>
    <name type="ordered locus">Mup32</name>
    <name type="ordered locus">Mup33</name>
</gene>
<proteinExistence type="evidence at protein level"/>
<keyword id="KW-0007">Acetylation</keyword>
<keyword id="KW-0024">Alternative initiation</keyword>
<keyword id="KW-0903">Direct protein sequencing</keyword>
<keyword id="KW-1035">Host cytoplasm</keyword>
<keyword id="KW-0378">Hydrolase</keyword>
<keyword id="KW-0426">Late protein</keyword>
<keyword id="KW-0645">Protease</keyword>
<keyword id="KW-1185">Reference proteome</keyword>
<keyword id="KW-0118">Viral capsid assembly</keyword>
<keyword id="KW-1273">Viral capsid maturation</keyword>
<keyword id="KW-1188">Viral release from host cell</keyword>
<sequence length="361" mass="38893">MKKHAIGIAALNALSIDDDGWCQLLPAGHFSARDGRPFDVTGGQGWFIDGEIAGRLVEGVRALNQDVLIDYEHNQLRKDKGLPPEQLVAAGWFNADEMQWREGEGLFIHPRWTAAAQQRIDDGEFGYLSAVFPYDTATGAVLQIRLAALTNDPGATGMKKLTALAADLPDILQQENKPMNETLRKLLARLGVTVPENADITDEQATAALTALDTLEINAGKVAALSAELEKAQKAAVDLTKYVPVESYNALRDELAQATAQSATASLSAVLDKAEQEGRIFKSERTYLEQLGGQIGVAALSAQLEKKQPIAALSAMQTTTAKIPSQEKTAVAVLSADEQAAVKALGITEAEYLKMKQEQEK</sequence>
<feature type="chain" id="PRO_0000028528" description="Protease I">
    <location>
        <begin position="1"/>
        <end position="361"/>
    </location>
</feature>
<feature type="splice variant" id="VSP_018866" description="In isoform Scaffold protein Z." evidence="3">
    <location>
        <begin position="1"/>
        <end position="178"/>
    </location>
</feature>
<dbReference type="EMBL" id="AF083977">
    <property type="protein sequence ID" value="AAF01110.1"/>
    <property type="molecule type" value="Genomic_DNA"/>
</dbReference>
<dbReference type="EMBL" id="AF083977">
    <property type="protein sequence ID" value="AAF01111.1"/>
    <property type="molecule type" value="Genomic_DNA"/>
</dbReference>
<dbReference type="EMBL" id="M74911">
    <property type="protein sequence ID" value="AAA68902.1"/>
    <property type="molecule type" value="Genomic_DNA"/>
</dbReference>
<dbReference type="PIR" id="D56613">
    <property type="entry name" value="D56613"/>
</dbReference>
<dbReference type="RefSeq" id="NP_050636.1">
    <molecule id="Q01267-1"/>
    <property type="nucleotide sequence ID" value="NC_000929.1"/>
</dbReference>
<dbReference type="RefSeq" id="NP_050637.1">
    <molecule id="Q01267-2"/>
    <property type="nucleotide sequence ID" value="NC_000929.1"/>
</dbReference>
<dbReference type="SMR" id="Q01267"/>
<dbReference type="GeneID" id="2636253"/>
<dbReference type="GeneID" id="2636276"/>
<dbReference type="KEGG" id="vg:2636253"/>
<dbReference type="KEGG" id="vg:2636276"/>
<dbReference type="Proteomes" id="UP000002611">
    <property type="component" value="Genome"/>
</dbReference>
<dbReference type="GO" id="GO:0030430">
    <property type="term" value="C:host cell cytoplasm"/>
    <property type="evidence" value="ECO:0007669"/>
    <property type="project" value="UniProtKB-SubCell"/>
</dbReference>
<dbReference type="GO" id="GO:0008233">
    <property type="term" value="F:peptidase activity"/>
    <property type="evidence" value="ECO:0007669"/>
    <property type="project" value="UniProtKB-KW"/>
</dbReference>
<dbReference type="GO" id="GO:0006508">
    <property type="term" value="P:proteolysis"/>
    <property type="evidence" value="ECO:0007669"/>
    <property type="project" value="UniProtKB-KW"/>
</dbReference>
<dbReference type="GO" id="GO:0046797">
    <property type="term" value="P:viral procapsid maturation"/>
    <property type="evidence" value="ECO:0007669"/>
    <property type="project" value="UniProtKB-KW"/>
</dbReference>
<dbReference type="InterPro" id="IPR012106">
    <property type="entry name" value="Phage_Mu_Gp1"/>
</dbReference>
<dbReference type="Pfam" id="PF10123">
    <property type="entry name" value="Mu-like_Pro"/>
    <property type="match status" value="1"/>
</dbReference>
<dbReference type="PIRSF" id="PIRSF016624">
    <property type="entry name" value="Mu_prophg_I"/>
    <property type="match status" value="1"/>
</dbReference>
<comment type="function">
    <text evidence="4 5 6">Protease I is involved in virion assembly and maturation. Protease I cleaves the portal protein to yield mature procapsids competent for DNA packaging (Probable). Isoform scaffold protein Z probably helps the capsid proteins to assemble into a functional capsid (Probable).</text>
</comment>
<comment type="subunit">
    <molecule>Protease I</molecule>
    <text evidence="2 3">Might interact with viral portal protein; this interaction gives rise to an early 25S initiator complex (Probable). The scaffolding protein Z and the capsid protein T should then be added to the initiator complex to yield immature prohead (Probable). Host GroEL and GroES are also essential for the correct assembly of viral head.</text>
</comment>
<comment type="subcellular location">
    <subcellularLocation>
        <location evidence="3">Host cytoplasm</location>
    </subcellularLocation>
</comment>
<comment type="alternative products">
    <event type="alternative initiation"/>
    <isoform>
        <id>Q01267-1</id>
        <name>Protease I</name>
        <sequence type="displayed"/>
    </isoform>
    <isoform>
        <id>Q01267-2</id>
        <name>Scaffold protein Z</name>
        <name>Gene product Z</name>
        <name>gpZ</name>
        <name>gp33</name>
        <sequence type="described" ref="VSP_018866"/>
    </isoform>
</comment>
<comment type="induction">
    <text evidence="1">Expressed in the late phase of the viral replicative cycle. Expression of late genes is activated by the viral late transcription activator C.</text>
</comment>
<comment type="PTM">
    <text evidence="3">The N-terminus is acetylated.</text>
</comment>
<comment type="similarity">
    <text evidence="3">Belongs to the peptidase U35 family.</text>
</comment>
<evidence type="ECO:0000269" key="1">
    <source>
    </source>
</evidence>
<evidence type="ECO:0000269" key="2">
    <source>
    </source>
</evidence>
<evidence type="ECO:0000305" key="3"/>
<evidence type="ECO:0000305" key="4">
    <source>
    </source>
</evidence>
<evidence type="ECO:0000305" key="5">
    <source>
    </source>
</evidence>
<evidence type="ECO:0000305" key="6">
    <source>
    </source>
</evidence>
<reference key="1">
    <citation type="journal article" date="2002" name="J. Mol. Biol.">
        <title>Bacteriophage Mu genome sequence: analysis and comparison with Mu-like prophages in Haemophilus, Neisseria and Deinococcus.</title>
        <authorList>
            <person name="Morgan G.J."/>
            <person name="Hatfull G.F."/>
            <person name="Casjens S."/>
            <person name="Hendrix R.W."/>
        </authorList>
    </citation>
    <scope>NUCLEOTIDE SEQUENCE [LARGE SCALE GENOMIC DNA]</scope>
    <scope>PROTEIN SEQUENCE OF 242-249</scope>
    <scope>IDENTIFICATION OF ISOFORM SCAFFOLD PROTEIN Z</scope>
    <scope>FUNCTION</scope>
</reference>
<reference key="2">
    <citation type="journal article" date="1992" name="DNA Seq.">
        <title>DNA sequence characterization of the G gene region of bacteriophage Mu.</title>
        <authorList>
            <person name="Baxa C.A."/>
            <person name="Chiang L."/>
            <person name="Howe M.M."/>
        </authorList>
    </citation>
    <scope>NUCLEOTIDE SEQUENCE [GENOMIC DNA] OF 1-58</scope>
</reference>
<reference key="3">
    <citation type="journal article" date="1993" name="Genetics">
        <title>Mutational analysis of a C-dependent late promoter of bacteriophage Mu.</title>
        <authorList>
            <person name="Chiang L.W."/>
            <person name="Howe M.M."/>
        </authorList>
    </citation>
    <scope>INDUCTION</scope>
</reference>
<reference key="4">
    <citation type="journal article" date="1996" name="Virology">
        <title>Bacteriophage Mu head assembly.</title>
        <authorList>
            <person name="Grimaud R."/>
        </authorList>
    </citation>
    <scope>FUNCTION</scope>
    <scope>SUBUNIT</scope>
</reference>
<reference key="5">
    <citation type="journal article" date="1998" name="J. Bacteriol.">
        <title>Assembly of both the head and tail of bacteriophage Mu is blocked in Escherichia coli groEL and groES mutants.</title>
        <authorList>
            <person name="Grimaud R."/>
            <person name="Toussaint A."/>
        </authorList>
    </citation>
    <scope>FUNCTION</scope>
</reference>
<organism>
    <name type="scientific">Escherichia phage Mu</name>
    <name type="common">Bacteriophage Mu</name>
    <dbReference type="NCBI Taxonomy" id="2681603"/>
    <lineage>
        <taxon>Viruses</taxon>
        <taxon>Duplodnaviria</taxon>
        <taxon>Heunggongvirae</taxon>
        <taxon>Uroviricota</taxon>
        <taxon>Caudoviricetes</taxon>
        <taxon>Muvirus</taxon>
        <taxon>Muvirus mu</taxon>
    </lineage>
</organism>
<protein>
    <recommendedName>
        <fullName>Protease I</fullName>
    </recommendedName>
    <alternativeName>
        <fullName>Gene product 32</fullName>
        <shortName>gp32</shortName>
    </alternativeName>
    <alternativeName>
        <fullName>Gene product I</fullName>
        <shortName>gpI</shortName>
    </alternativeName>
</protein>
<accession>Q01267</accession>
<accession>Q9T1W2</accession>
<accession>Q9T1W3</accession>
<organismHost>
    <name type="scientific">Enterobacteriaceae</name>
    <dbReference type="NCBI Taxonomy" id="543"/>
</organismHost>
<name>PRO_BPMU</name>